<keyword id="KW-0067">ATP-binding</keyword>
<keyword id="KW-0173">Coenzyme A biosynthesis</keyword>
<keyword id="KW-0963">Cytoplasm</keyword>
<keyword id="KW-0460">Magnesium</keyword>
<keyword id="KW-0547">Nucleotide-binding</keyword>
<keyword id="KW-0548">Nucleotidyltransferase</keyword>
<keyword id="KW-0808">Transferase</keyword>
<feature type="chain" id="PRO_1000096835" description="Phosphopantetheine adenylyltransferase">
    <location>
        <begin position="1"/>
        <end position="159"/>
    </location>
</feature>
<feature type="binding site" evidence="1">
    <location>
        <begin position="10"/>
        <end position="11"/>
    </location>
    <ligand>
        <name>ATP</name>
        <dbReference type="ChEBI" id="CHEBI:30616"/>
    </ligand>
</feature>
<feature type="binding site" evidence="1">
    <location>
        <position position="10"/>
    </location>
    <ligand>
        <name>substrate</name>
    </ligand>
</feature>
<feature type="binding site" evidence="1">
    <location>
        <position position="18"/>
    </location>
    <ligand>
        <name>ATP</name>
        <dbReference type="ChEBI" id="CHEBI:30616"/>
    </ligand>
</feature>
<feature type="binding site" evidence="1">
    <location>
        <position position="42"/>
    </location>
    <ligand>
        <name>substrate</name>
    </ligand>
</feature>
<feature type="binding site" evidence="1">
    <location>
        <position position="74"/>
    </location>
    <ligand>
        <name>substrate</name>
    </ligand>
</feature>
<feature type="binding site" evidence="1">
    <location>
        <position position="88"/>
    </location>
    <ligand>
        <name>substrate</name>
    </ligand>
</feature>
<feature type="binding site" evidence="1">
    <location>
        <begin position="89"/>
        <end position="91"/>
    </location>
    <ligand>
        <name>ATP</name>
        <dbReference type="ChEBI" id="CHEBI:30616"/>
    </ligand>
</feature>
<feature type="binding site" evidence="1">
    <location>
        <position position="99"/>
    </location>
    <ligand>
        <name>ATP</name>
        <dbReference type="ChEBI" id="CHEBI:30616"/>
    </ligand>
</feature>
<feature type="binding site" evidence="1">
    <location>
        <begin position="124"/>
        <end position="130"/>
    </location>
    <ligand>
        <name>ATP</name>
        <dbReference type="ChEBI" id="CHEBI:30616"/>
    </ligand>
</feature>
<feature type="site" description="Transition state stabilizer" evidence="1">
    <location>
        <position position="18"/>
    </location>
</feature>
<organism>
    <name type="scientific">Salmonella gallinarum (strain 287/91 / NCTC 13346)</name>
    <dbReference type="NCBI Taxonomy" id="550538"/>
    <lineage>
        <taxon>Bacteria</taxon>
        <taxon>Pseudomonadati</taxon>
        <taxon>Pseudomonadota</taxon>
        <taxon>Gammaproteobacteria</taxon>
        <taxon>Enterobacterales</taxon>
        <taxon>Enterobacteriaceae</taxon>
        <taxon>Salmonella</taxon>
    </lineage>
</organism>
<evidence type="ECO:0000255" key="1">
    <source>
        <dbReference type="HAMAP-Rule" id="MF_00151"/>
    </source>
</evidence>
<name>COAD_SALG2</name>
<proteinExistence type="inferred from homology"/>
<accession>B5RGF3</accession>
<gene>
    <name evidence="1" type="primary">coaD</name>
    <name type="ordered locus">SG3706</name>
</gene>
<comment type="function">
    <text evidence="1">Reversibly transfers an adenylyl group from ATP to 4'-phosphopantetheine, yielding dephospho-CoA (dPCoA) and pyrophosphate.</text>
</comment>
<comment type="catalytic activity">
    <reaction evidence="1">
        <text>(R)-4'-phosphopantetheine + ATP + H(+) = 3'-dephospho-CoA + diphosphate</text>
        <dbReference type="Rhea" id="RHEA:19801"/>
        <dbReference type="ChEBI" id="CHEBI:15378"/>
        <dbReference type="ChEBI" id="CHEBI:30616"/>
        <dbReference type="ChEBI" id="CHEBI:33019"/>
        <dbReference type="ChEBI" id="CHEBI:57328"/>
        <dbReference type="ChEBI" id="CHEBI:61723"/>
        <dbReference type="EC" id="2.7.7.3"/>
    </reaction>
</comment>
<comment type="cofactor">
    <cofactor evidence="1">
        <name>Mg(2+)</name>
        <dbReference type="ChEBI" id="CHEBI:18420"/>
    </cofactor>
</comment>
<comment type="pathway">
    <text evidence="1">Cofactor biosynthesis; coenzyme A biosynthesis; CoA from (R)-pantothenate: step 4/5.</text>
</comment>
<comment type="subunit">
    <text evidence="1">Homohexamer.</text>
</comment>
<comment type="subcellular location">
    <subcellularLocation>
        <location evidence="1">Cytoplasm</location>
    </subcellularLocation>
</comment>
<comment type="similarity">
    <text evidence="1">Belongs to the bacterial CoaD family.</text>
</comment>
<sequence>MQKRAIYPGTFDPITNGHLDIVTRATQMFDHVILAIAASPGKKPMFTLDERVALAQKATAHLGNVEVVGFSDLMANFARDRQANILIRGLRAVADFEYEMQLAHMNRHLMPQLESVFLMPSKEWSFISSSLVKEVARHQGDVTHFLPDNVHQALMDKLK</sequence>
<dbReference type="EC" id="2.7.7.3" evidence="1"/>
<dbReference type="EMBL" id="AM933173">
    <property type="protein sequence ID" value="CAR39486.1"/>
    <property type="molecule type" value="Genomic_DNA"/>
</dbReference>
<dbReference type="RefSeq" id="WP_001171884.1">
    <property type="nucleotide sequence ID" value="NC_011274.1"/>
</dbReference>
<dbReference type="SMR" id="B5RGF3"/>
<dbReference type="KEGG" id="seg:SG3706"/>
<dbReference type="HOGENOM" id="CLU_100149_0_1_6"/>
<dbReference type="UniPathway" id="UPA00241">
    <property type="reaction ID" value="UER00355"/>
</dbReference>
<dbReference type="Proteomes" id="UP000008321">
    <property type="component" value="Chromosome"/>
</dbReference>
<dbReference type="GO" id="GO:0005737">
    <property type="term" value="C:cytoplasm"/>
    <property type="evidence" value="ECO:0007669"/>
    <property type="project" value="UniProtKB-SubCell"/>
</dbReference>
<dbReference type="GO" id="GO:0005524">
    <property type="term" value="F:ATP binding"/>
    <property type="evidence" value="ECO:0007669"/>
    <property type="project" value="UniProtKB-KW"/>
</dbReference>
<dbReference type="GO" id="GO:0004595">
    <property type="term" value="F:pantetheine-phosphate adenylyltransferase activity"/>
    <property type="evidence" value="ECO:0007669"/>
    <property type="project" value="UniProtKB-UniRule"/>
</dbReference>
<dbReference type="GO" id="GO:0015937">
    <property type="term" value="P:coenzyme A biosynthetic process"/>
    <property type="evidence" value="ECO:0007669"/>
    <property type="project" value="UniProtKB-UniRule"/>
</dbReference>
<dbReference type="CDD" id="cd02163">
    <property type="entry name" value="PPAT"/>
    <property type="match status" value="1"/>
</dbReference>
<dbReference type="FunFam" id="3.40.50.620:FF:000012">
    <property type="entry name" value="Phosphopantetheine adenylyltransferase"/>
    <property type="match status" value="1"/>
</dbReference>
<dbReference type="Gene3D" id="3.40.50.620">
    <property type="entry name" value="HUPs"/>
    <property type="match status" value="1"/>
</dbReference>
<dbReference type="HAMAP" id="MF_00151">
    <property type="entry name" value="PPAT_bact"/>
    <property type="match status" value="1"/>
</dbReference>
<dbReference type="InterPro" id="IPR004821">
    <property type="entry name" value="Cyt_trans-like"/>
</dbReference>
<dbReference type="InterPro" id="IPR001980">
    <property type="entry name" value="PPAT"/>
</dbReference>
<dbReference type="InterPro" id="IPR014729">
    <property type="entry name" value="Rossmann-like_a/b/a_fold"/>
</dbReference>
<dbReference type="NCBIfam" id="TIGR01510">
    <property type="entry name" value="coaD_prev_kdtB"/>
    <property type="match status" value="1"/>
</dbReference>
<dbReference type="NCBIfam" id="TIGR00125">
    <property type="entry name" value="cyt_tran_rel"/>
    <property type="match status" value="1"/>
</dbReference>
<dbReference type="PANTHER" id="PTHR21342">
    <property type="entry name" value="PHOSPHOPANTETHEINE ADENYLYLTRANSFERASE"/>
    <property type="match status" value="1"/>
</dbReference>
<dbReference type="PANTHER" id="PTHR21342:SF1">
    <property type="entry name" value="PHOSPHOPANTETHEINE ADENYLYLTRANSFERASE"/>
    <property type="match status" value="1"/>
</dbReference>
<dbReference type="Pfam" id="PF01467">
    <property type="entry name" value="CTP_transf_like"/>
    <property type="match status" value="1"/>
</dbReference>
<dbReference type="PRINTS" id="PR01020">
    <property type="entry name" value="LPSBIOSNTHSS"/>
</dbReference>
<dbReference type="SUPFAM" id="SSF52374">
    <property type="entry name" value="Nucleotidylyl transferase"/>
    <property type="match status" value="1"/>
</dbReference>
<protein>
    <recommendedName>
        <fullName evidence="1">Phosphopantetheine adenylyltransferase</fullName>
        <ecNumber evidence="1">2.7.7.3</ecNumber>
    </recommendedName>
    <alternativeName>
        <fullName evidence="1">Dephospho-CoA pyrophosphorylase</fullName>
    </alternativeName>
    <alternativeName>
        <fullName evidence="1">Pantetheine-phosphate adenylyltransferase</fullName>
        <shortName evidence="1">PPAT</shortName>
    </alternativeName>
</protein>
<reference key="1">
    <citation type="journal article" date="2008" name="Genome Res.">
        <title>Comparative genome analysis of Salmonella enteritidis PT4 and Salmonella gallinarum 287/91 provides insights into evolutionary and host adaptation pathways.</title>
        <authorList>
            <person name="Thomson N.R."/>
            <person name="Clayton D.J."/>
            <person name="Windhorst D."/>
            <person name="Vernikos G."/>
            <person name="Davidson S."/>
            <person name="Churcher C."/>
            <person name="Quail M.A."/>
            <person name="Stevens M."/>
            <person name="Jones M.A."/>
            <person name="Watson M."/>
            <person name="Barron A."/>
            <person name="Layton A."/>
            <person name="Pickard D."/>
            <person name="Kingsley R.A."/>
            <person name="Bignell A."/>
            <person name="Clark L."/>
            <person name="Harris B."/>
            <person name="Ormond D."/>
            <person name="Abdellah Z."/>
            <person name="Brooks K."/>
            <person name="Cherevach I."/>
            <person name="Chillingworth T."/>
            <person name="Woodward J."/>
            <person name="Norberczak H."/>
            <person name="Lord A."/>
            <person name="Arrowsmith C."/>
            <person name="Jagels K."/>
            <person name="Moule S."/>
            <person name="Mungall K."/>
            <person name="Saunders M."/>
            <person name="Whitehead S."/>
            <person name="Chabalgoity J.A."/>
            <person name="Maskell D."/>
            <person name="Humphreys T."/>
            <person name="Roberts M."/>
            <person name="Barrow P.A."/>
            <person name="Dougan G."/>
            <person name="Parkhill J."/>
        </authorList>
    </citation>
    <scope>NUCLEOTIDE SEQUENCE [LARGE SCALE GENOMIC DNA]</scope>
    <source>
        <strain>287/91 / NCTC 13346</strain>
    </source>
</reference>